<name>GLO2_NEIMB</name>
<dbReference type="EC" id="3.1.2.6" evidence="1"/>
<dbReference type="EMBL" id="AE002098">
    <property type="protein sequence ID" value="AAF42324.1"/>
    <property type="molecule type" value="Genomic_DNA"/>
</dbReference>
<dbReference type="PIR" id="H81017">
    <property type="entry name" value="H81017"/>
</dbReference>
<dbReference type="RefSeq" id="NP_274989.1">
    <property type="nucleotide sequence ID" value="NC_003112.2"/>
</dbReference>
<dbReference type="RefSeq" id="WP_002219913.1">
    <property type="nucleotide sequence ID" value="NC_003112.2"/>
</dbReference>
<dbReference type="SMR" id="Q9JXK4"/>
<dbReference type="FunCoup" id="Q9JXK4">
    <property type="interactions" value="331"/>
</dbReference>
<dbReference type="STRING" id="122586.NMB1997"/>
<dbReference type="PaxDb" id="122586-NMB1997"/>
<dbReference type="KEGG" id="nme:NMB1997"/>
<dbReference type="PATRIC" id="fig|122586.8.peg.2551"/>
<dbReference type="HOGENOM" id="CLU_030571_4_1_4"/>
<dbReference type="InParanoid" id="Q9JXK4"/>
<dbReference type="OrthoDB" id="9802248at2"/>
<dbReference type="UniPathway" id="UPA00619">
    <property type="reaction ID" value="UER00676"/>
</dbReference>
<dbReference type="Proteomes" id="UP000000425">
    <property type="component" value="Chromosome"/>
</dbReference>
<dbReference type="GO" id="GO:0004416">
    <property type="term" value="F:hydroxyacylglutathione hydrolase activity"/>
    <property type="evidence" value="ECO:0007669"/>
    <property type="project" value="UniProtKB-UniRule"/>
</dbReference>
<dbReference type="GO" id="GO:0046872">
    <property type="term" value="F:metal ion binding"/>
    <property type="evidence" value="ECO:0007669"/>
    <property type="project" value="UniProtKB-KW"/>
</dbReference>
<dbReference type="GO" id="GO:0019243">
    <property type="term" value="P:methylglyoxal catabolic process to D-lactate via S-lactoyl-glutathione"/>
    <property type="evidence" value="ECO:0007669"/>
    <property type="project" value="InterPro"/>
</dbReference>
<dbReference type="CDD" id="cd07723">
    <property type="entry name" value="hydroxyacylglutathione_hydrolase_MBL-fold"/>
    <property type="match status" value="1"/>
</dbReference>
<dbReference type="Gene3D" id="3.60.15.10">
    <property type="entry name" value="Ribonuclease Z/Hydroxyacylglutathione hydrolase-like"/>
    <property type="match status" value="1"/>
</dbReference>
<dbReference type="HAMAP" id="MF_01374">
    <property type="entry name" value="Glyoxalase_2"/>
    <property type="match status" value="1"/>
</dbReference>
<dbReference type="InterPro" id="IPR035680">
    <property type="entry name" value="Clx_II_MBL"/>
</dbReference>
<dbReference type="InterPro" id="IPR050110">
    <property type="entry name" value="Glyoxalase_II_hydrolase"/>
</dbReference>
<dbReference type="InterPro" id="IPR032282">
    <property type="entry name" value="HAGH_C"/>
</dbReference>
<dbReference type="InterPro" id="IPR017782">
    <property type="entry name" value="Hydroxyacylglutathione_Hdrlase"/>
</dbReference>
<dbReference type="InterPro" id="IPR001279">
    <property type="entry name" value="Metallo-B-lactamas"/>
</dbReference>
<dbReference type="InterPro" id="IPR036866">
    <property type="entry name" value="RibonucZ/Hydroxyglut_hydro"/>
</dbReference>
<dbReference type="NCBIfam" id="TIGR03413">
    <property type="entry name" value="GSH_gloB"/>
    <property type="match status" value="1"/>
</dbReference>
<dbReference type="PANTHER" id="PTHR43705">
    <property type="entry name" value="HYDROXYACYLGLUTATHIONE HYDROLASE"/>
    <property type="match status" value="1"/>
</dbReference>
<dbReference type="PANTHER" id="PTHR43705:SF1">
    <property type="entry name" value="HYDROXYACYLGLUTATHIONE HYDROLASE GLOB"/>
    <property type="match status" value="1"/>
</dbReference>
<dbReference type="Pfam" id="PF16123">
    <property type="entry name" value="HAGH_C"/>
    <property type="match status" value="1"/>
</dbReference>
<dbReference type="Pfam" id="PF00753">
    <property type="entry name" value="Lactamase_B"/>
    <property type="match status" value="1"/>
</dbReference>
<dbReference type="SMART" id="SM00849">
    <property type="entry name" value="Lactamase_B"/>
    <property type="match status" value="1"/>
</dbReference>
<dbReference type="SUPFAM" id="SSF56281">
    <property type="entry name" value="Metallo-hydrolase/oxidoreductase"/>
    <property type="match status" value="1"/>
</dbReference>
<reference key="1">
    <citation type="journal article" date="2000" name="Science">
        <title>Complete genome sequence of Neisseria meningitidis serogroup B strain MC58.</title>
        <authorList>
            <person name="Tettelin H."/>
            <person name="Saunders N.J."/>
            <person name="Heidelberg J.F."/>
            <person name="Jeffries A.C."/>
            <person name="Nelson K.E."/>
            <person name="Eisen J.A."/>
            <person name="Ketchum K.A."/>
            <person name="Hood D.W."/>
            <person name="Peden J.F."/>
            <person name="Dodson R.J."/>
            <person name="Nelson W.C."/>
            <person name="Gwinn M.L."/>
            <person name="DeBoy R.T."/>
            <person name="Peterson J.D."/>
            <person name="Hickey E.K."/>
            <person name="Haft D.H."/>
            <person name="Salzberg S.L."/>
            <person name="White O."/>
            <person name="Fleischmann R.D."/>
            <person name="Dougherty B.A."/>
            <person name="Mason T.M."/>
            <person name="Ciecko A."/>
            <person name="Parksey D.S."/>
            <person name="Blair E."/>
            <person name="Cittone H."/>
            <person name="Clark E.B."/>
            <person name="Cotton M.D."/>
            <person name="Utterback T.R."/>
            <person name="Khouri H.M."/>
            <person name="Qin H."/>
            <person name="Vamathevan J.J."/>
            <person name="Gill J."/>
            <person name="Scarlato V."/>
            <person name="Masignani V."/>
            <person name="Pizza M."/>
            <person name="Grandi G."/>
            <person name="Sun L."/>
            <person name="Smith H.O."/>
            <person name="Fraser C.M."/>
            <person name="Moxon E.R."/>
            <person name="Rappuoli R."/>
            <person name="Venter J.C."/>
        </authorList>
    </citation>
    <scope>NUCLEOTIDE SEQUENCE [LARGE SCALE GENOMIC DNA]</scope>
    <source>
        <strain>ATCC BAA-335 / MC58</strain>
    </source>
</reference>
<gene>
    <name evidence="1" type="primary">gloB</name>
    <name type="ordered locus">NMB1997</name>
</gene>
<accession>Q9JXK4</accession>
<comment type="function">
    <text evidence="1">Thiolesterase that catalyzes the hydrolysis of S-D-lactoyl-glutathione to form glutathione and D-lactic acid.</text>
</comment>
<comment type="catalytic activity">
    <reaction evidence="1">
        <text>an S-(2-hydroxyacyl)glutathione + H2O = a 2-hydroxy carboxylate + glutathione + H(+)</text>
        <dbReference type="Rhea" id="RHEA:21864"/>
        <dbReference type="ChEBI" id="CHEBI:15377"/>
        <dbReference type="ChEBI" id="CHEBI:15378"/>
        <dbReference type="ChEBI" id="CHEBI:57925"/>
        <dbReference type="ChEBI" id="CHEBI:58896"/>
        <dbReference type="ChEBI" id="CHEBI:71261"/>
        <dbReference type="EC" id="3.1.2.6"/>
    </reaction>
</comment>
<comment type="cofactor">
    <cofactor evidence="1">
        <name>Zn(2+)</name>
        <dbReference type="ChEBI" id="CHEBI:29105"/>
    </cofactor>
    <text evidence="1">Binds 2 Zn(2+) ions per subunit.</text>
</comment>
<comment type="pathway">
    <text evidence="1">Secondary metabolite metabolism; methylglyoxal degradation; (R)-lactate from methylglyoxal: step 2/2.</text>
</comment>
<comment type="subunit">
    <text evidence="1">Monomer.</text>
</comment>
<comment type="similarity">
    <text evidence="1">Belongs to the metallo-beta-lactamase superfamily. Glyoxalase II family.</text>
</comment>
<sequence length="252" mass="28155">MKITPVKALTDNYIWMIQHGNHAVCVDPSEPSPVLEFLVRNRLMLAQTWVTHPHPDHEGGAAALWRGYMESPVYGESDIEAATHTVTAGTQFTFGDGQVTVWATPGHTDRHTSYLLETSDGIHVFCGDTLFSAGCGRVFTGTIEQLYDSFQRFNRLPENTLFYPAHEYTAANLRFAAHIEPDNADIQTALKAAAHTPTLPVTLAHERRVNPFLRVDLPHVRDRAEALSGKTLNSSLDTFVALRELKNQYRTK</sequence>
<proteinExistence type="inferred from homology"/>
<protein>
    <recommendedName>
        <fullName evidence="1">Hydroxyacylglutathione hydrolase</fullName>
        <ecNumber evidence="1">3.1.2.6</ecNumber>
    </recommendedName>
    <alternativeName>
        <fullName evidence="1">Glyoxalase II</fullName>
        <shortName evidence="1">Glx II</shortName>
    </alternativeName>
</protein>
<feature type="chain" id="PRO_0000309664" description="Hydroxyacylglutathione hydrolase">
    <location>
        <begin position="1"/>
        <end position="252"/>
    </location>
</feature>
<feature type="binding site" evidence="1">
    <location>
        <position position="52"/>
    </location>
    <ligand>
        <name>Zn(2+)</name>
        <dbReference type="ChEBI" id="CHEBI:29105"/>
        <label>1</label>
    </ligand>
</feature>
<feature type="binding site" evidence="1">
    <location>
        <position position="54"/>
    </location>
    <ligand>
        <name>Zn(2+)</name>
        <dbReference type="ChEBI" id="CHEBI:29105"/>
        <label>1</label>
    </ligand>
</feature>
<feature type="binding site" evidence="1">
    <location>
        <position position="56"/>
    </location>
    <ligand>
        <name>Zn(2+)</name>
        <dbReference type="ChEBI" id="CHEBI:29105"/>
        <label>2</label>
    </ligand>
</feature>
<feature type="binding site" evidence="1">
    <location>
        <position position="57"/>
    </location>
    <ligand>
        <name>Zn(2+)</name>
        <dbReference type="ChEBI" id="CHEBI:29105"/>
        <label>2</label>
    </ligand>
</feature>
<feature type="binding site" evidence="1">
    <location>
        <position position="107"/>
    </location>
    <ligand>
        <name>Zn(2+)</name>
        <dbReference type="ChEBI" id="CHEBI:29105"/>
        <label>1</label>
    </ligand>
</feature>
<feature type="binding site" evidence="1">
    <location>
        <position position="128"/>
    </location>
    <ligand>
        <name>Zn(2+)</name>
        <dbReference type="ChEBI" id="CHEBI:29105"/>
        <label>1</label>
    </ligand>
</feature>
<feature type="binding site" evidence="1">
    <location>
        <position position="128"/>
    </location>
    <ligand>
        <name>Zn(2+)</name>
        <dbReference type="ChEBI" id="CHEBI:29105"/>
        <label>2</label>
    </ligand>
</feature>
<feature type="binding site" evidence="1">
    <location>
        <position position="166"/>
    </location>
    <ligand>
        <name>Zn(2+)</name>
        <dbReference type="ChEBI" id="CHEBI:29105"/>
        <label>2</label>
    </ligand>
</feature>
<keyword id="KW-0378">Hydrolase</keyword>
<keyword id="KW-0479">Metal-binding</keyword>
<keyword id="KW-1185">Reference proteome</keyword>
<keyword id="KW-0862">Zinc</keyword>
<organism>
    <name type="scientific">Neisseria meningitidis serogroup B (strain ATCC BAA-335 / MC58)</name>
    <dbReference type="NCBI Taxonomy" id="122586"/>
    <lineage>
        <taxon>Bacteria</taxon>
        <taxon>Pseudomonadati</taxon>
        <taxon>Pseudomonadota</taxon>
        <taxon>Betaproteobacteria</taxon>
        <taxon>Neisseriales</taxon>
        <taxon>Neisseriaceae</taxon>
        <taxon>Neisseria</taxon>
    </lineage>
</organism>
<evidence type="ECO:0000255" key="1">
    <source>
        <dbReference type="HAMAP-Rule" id="MF_01374"/>
    </source>
</evidence>